<comment type="function">
    <text evidence="1">One of the primary rRNA binding proteins, it binds directly to 16S rRNA central domain where it helps coordinate assembly of the platform of the 30S subunit.</text>
</comment>
<comment type="subunit">
    <text evidence="1">Part of the 30S ribosomal subunit. Contacts proteins S5 and S12.</text>
</comment>
<comment type="similarity">
    <text evidence="1">Belongs to the universal ribosomal protein uS8 family.</text>
</comment>
<keyword id="KW-0687">Ribonucleoprotein</keyword>
<keyword id="KW-0689">Ribosomal protein</keyword>
<keyword id="KW-0694">RNA-binding</keyword>
<keyword id="KW-0699">rRNA-binding</keyword>
<reference key="1">
    <citation type="submission" date="2008-01" db="EMBL/GenBank/DDBJ databases">
        <title>Complete sequence of Thermoanaerobacter sp. X514.</title>
        <authorList>
            <consortium name="US DOE Joint Genome Institute"/>
            <person name="Copeland A."/>
            <person name="Lucas S."/>
            <person name="Lapidus A."/>
            <person name="Barry K."/>
            <person name="Glavina del Rio T."/>
            <person name="Dalin E."/>
            <person name="Tice H."/>
            <person name="Pitluck S."/>
            <person name="Bruce D."/>
            <person name="Goodwin L."/>
            <person name="Saunders E."/>
            <person name="Brettin T."/>
            <person name="Detter J.C."/>
            <person name="Han C."/>
            <person name="Schmutz J."/>
            <person name="Larimer F."/>
            <person name="Land M."/>
            <person name="Hauser L."/>
            <person name="Kyrpides N."/>
            <person name="Kim E."/>
            <person name="Hemme C."/>
            <person name="Fields M.W."/>
            <person name="He Z."/>
            <person name="Zhou J."/>
            <person name="Richardson P."/>
        </authorList>
    </citation>
    <scope>NUCLEOTIDE SEQUENCE [LARGE SCALE GENOMIC DNA]</scope>
    <source>
        <strain>X514</strain>
    </source>
</reference>
<gene>
    <name evidence="1" type="primary">rpsH</name>
    <name type="ordered locus">Teth514_0881</name>
</gene>
<protein>
    <recommendedName>
        <fullName evidence="1">Small ribosomal subunit protein uS8</fullName>
    </recommendedName>
    <alternativeName>
        <fullName evidence="2">30S ribosomal protein S8</fullName>
    </alternativeName>
</protein>
<evidence type="ECO:0000255" key="1">
    <source>
        <dbReference type="HAMAP-Rule" id="MF_01302"/>
    </source>
</evidence>
<evidence type="ECO:0000305" key="2"/>
<organism>
    <name type="scientific">Thermoanaerobacter sp. (strain X514)</name>
    <dbReference type="NCBI Taxonomy" id="399726"/>
    <lineage>
        <taxon>Bacteria</taxon>
        <taxon>Bacillati</taxon>
        <taxon>Bacillota</taxon>
        <taxon>Clostridia</taxon>
        <taxon>Thermoanaerobacterales</taxon>
        <taxon>Thermoanaerobacteraceae</taxon>
        <taxon>Thermoanaerobacter</taxon>
    </lineage>
</organism>
<dbReference type="EMBL" id="CP000923">
    <property type="protein sequence ID" value="ABY92183.1"/>
    <property type="molecule type" value="Genomic_DNA"/>
</dbReference>
<dbReference type="RefSeq" id="WP_003868574.1">
    <property type="nucleotide sequence ID" value="NC_010320.1"/>
</dbReference>
<dbReference type="SMR" id="B0K5Q7"/>
<dbReference type="KEGG" id="tex:Teth514_0881"/>
<dbReference type="HOGENOM" id="CLU_098428_0_2_9"/>
<dbReference type="Proteomes" id="UP000002155">
    <property type="component" value="Chromosome"/>
</dbReference>
<dbReference type="GO" id="GO:1990904">
    <property type="term" value="C:ribonucleoprotein complex"/>
    <property type="evidence" value="ECO:0007669"/>
    <property type="project" value="UniProtKB-KW"/>
</dbReference>
<dbReference type="GO" id="GO:0005840">
    <property type="term" value="C:ribosome"/>
    <property type="evidence" value="ECO:0007669"/>
    <property type="project" value="UniProtKB-KW"/>
</dbReference>
<dbReference type="GO" id="GO:0019843">
    <property type="term" value="F:rRNA binding"/>
    <property type="evidence" value="ECO:0007669"/>
    <property type="project" value="UniProtKB-UniRule"/>
</dbReference>
<dbReference type="GO" id="GO:0003735">
    <property type="term" value="F:structural constituent of ribosome"/>
    <property type="evidence" value="ECO:0007669"/>
    <property type="project" value="InterPro"/>
</dbReference>
<dbReference type="GO" id="GO:0006412">
    <property type="term" value="P:translation"/>
    <property type="evidence" value="ECO:0007669"/>
    <property type="project" value="UniProtKB-UniRule"/>
</dbReference>
<dbReference type="FunFam" id="3.30.1370.30:FF:000002">
    <property type="entry name" value="30S ribosomal protein S8"/>
    <property type="match status" value="1"/>
</dbReference>
<dbReference type="FunFam" id="3.30.1490.10:FF:000001">
    <property type="entry name" value="30S ribosomal protein S8"/>
    <property type="match status" value="1"/>
</dbReference>
<dbReference type="Gene3D" id="3.30.1370.30">
    <property type="match status" value="1"/>
</dbReference>
<dbReference type="Gene3D" id="3.30.1490.10">
    <property type="match status" value="1"/>
</dbReference>
<dbReference type="HAMAP" id="MF_01302_B">
    <property type="entry name" value="Ribosomal_uS8_B"/>
    <property type="match status" value="1"/>
</dbReference>
<dbReference type="InterPro" id="IPR000630">
    <property type="entry name" value="Ribosomal_uS8"/>
</dbReference>
<dbReference type="InterPro" id="IPR047863">
    <property type="entry name" value="Ribosomal_uS8_CS"/>
</dbReference>
<dbReference type="InterPro" id="IPR035987">
    <property type="entry name" value="Ribosomal_uS8_sf"/>
</dbReference>
<dbReference type="NCBIfam" id="NF001109">
    <property type="entry name" value="PRK00136.1"/>
    <property type="match status" value="1"/>
</dbReference>
<dbReference type="PANTHER" id="PTHR11758">
    <property type="entry name" value="40S RIBOSOMAL PROTEIN S15A"/>
    <property type="match status" value="1"/>
</dbReference>
<dbReference type="Pfam" id="PF00410">
    <property type="entry name" value="Ribosomal_S8"/>
    <property type="match status" value="1"/>
</dbReference>
<dbReference type="SUPFAM" id="SSF56047">
    <property type="entry name" value="Ribosomal protein S8"/>
    <property type="match status" value="1"/>
</dbReference>
<dbReference type="PROSITE" id="PS00053">
    <property type="entry name" value="RIBOSOMAL_S8"/>
    <property type="match status" value="1"/>
</dbReference>
<accession>B0K5Q7</accession>
<name>RS8_THEPX</name>
<proteinExistence type="inferred from homology"/>
<feature type="chain" id="PRO_1000140629" description="Small ribosomal subunit protein uS8">
    <location>
        <begin position="1"/>
        <end position="132"/>
    </location>
</feature>
<sequence>MVMTDPIADMLTRIRNANIARHETVEIPASNMKRAIAMIMLKEGFIKSVEEIDDGKGGILKLTLKYGPNKERVISGLKRISKPGLRVYARHDELPRVLGGLGIAIISTSKGIMTDKEARKAGVGGEVICYIW</sequence>